<dbReference type="EC" id="7.1.2.2" evidence="1"/>
<dbReference type="EMBL" id="AE008923">
    <property type="protein sequence ID" value="AAM38492.1"/>
    <property type="molecule type" value="Genomic_DNA"/>
</dbReference>
<dbReference type="RefSeq" id="WP_003484008.1">
    <property type="nucleotide sequence ID" value="NC_003919.1"/>
</dbReference>
<dbReference type="SMR" id="Q8PGG7"/>
<dbReference type="GeneID" id="97511840"/>
<dbReference type="KEGG" id="xac:XAC3649"/>
<dbReference type="eggNOG" id="COG0055">
    <property type="taxonomic scope" value="Bacteria"/>
</dbReference>
<dbReference type="HOGENOM" id="CLU_022398_0_2_6"/>
<dbReference type="Proteomes" id="UP000000576">
    <property type="component" value="Chromosome"/>
</dbReference>
<dbReference type="GO" id="GO:0005886">
    <property type="term" value="C:plasma membrane"/>
    <property type="evidence" value="ECO:0007669"/>
    <property type="project" value="UniProtKB-SubCell"/>
</dbReference>
<dbReference type="GO" id="GO:0045259">
    <property type="term" value="C:proton-transporting ATP synthase complex"/>
    <property type="evidence" value="ECO:0007669"/>
    <property type="project" value="UniProtKB-KW"/>
</dbReference>
<dbReference type="GO" id="GO:0005524">
    <property type="term" value="F:ATP binding"/>
    <property type="evidence" value="ECO:0007669"/>
    <property type="project" value="UniProtKB-UniRule"/>
</dbReference>
<dbReference type="GO" id="GO:0016887">
    <property type="term" value="F:ATP hydrolysis activity"/>
    <property type="evidence" value="ECO:0007669"/>
    <property type="project" value="InterPro"/>
</dbReference>
<dbReference type="GO" id="GO:0046933">
    <property type="term" value="F:proton-transporting ATP synthase activity, rotational mechanism"/>
    <property type="evidence" value="ECO:0007669"/>
    <property type="project" value="UniProtKB-UniRule"/>
</dbReference>
<dbReference type="CDD" id="cd18110">
    <property type="entry name" value="ATP-synt_F1_beta_C"/>
    <property type="match status" value="1"/>
</dbReference>
<dbReference type="CDD" id="cd18115">
    <property type="entry name" value="ATP-synt_F1_beta_N"/>
    <property type="match status" value="1"/>
</dbReference>
<dbReference type="CDD" id="cd01133">
    <property type="entry name" value="F1-ATPase_beta_CD"/>
    <property type="match status" value="1"/>
</dbReference>
<dbReference type="FunFam" id="1.10.1140.10:FF:000001">
    <property type="entry name" value="ATP synthase subunit beta"/>
    <property type="match status" value="1"/>
</dbReference>
<dbReference type="FunFam" id="3.40.50.300:FF:000004">
    <property type="entry name" value="ATP synthase subunit beta"/>
    <property type="match status" value="1"/>
</dbReference>
<dbReference type="Gene3D" id="2.40.10.170">
    <property type="match status" value="1"/>
</dbReference>
<dbReference type="Gene3D" id="1.10.1140.10">
    <property type="entry name" value="Bovine Mitochondrial F1-atpase, Atp Synthase Beta Chain, Chain D, domain 3"/>
    <property type="match status" value="1"/>
</dbReference>
<dbReference type="Gene3D" id="3.40.50.300">
    <property type="entry name" value="P-loop containing nucleotide triphosphate hydrolases"/>
    <property type="match status" value="1"/>
</dbReference>
<dbReference type="HAMAP" id="MF_01347">
    <property type="entry name" value="ATP_synth_beta_bact"/>
    <property type="match status" value="1"/>
</dbReference>
<dbReference type="InterPro" id="IPR003593">
    <property type="entry name" value="AAA+_ATPase"/>
</dbReference>
<dbReference type="InterPro" id="IPR055190">
    <property type="entry name" value="ATP-synt_VA_C"/>
</dbReference>
<dbReference type="InterPro" id="IPR005722">
    <property type="entry name" value="ATP_synth_F1_bsu"/>
</dbReference>
<dbReference type="InterPro" id="IPR020003">
    <property type="entry name" value="ATPase_a/bsu_AS"/>
</dbReference>
<dbReference type="InterPro" id="IPR050053">
    <property type="entry name" value="ATPase_alpha/beta_chains"/>
</dbReference>
<dbReference type="InterPro" id="IPR004100">
    <property type="entry name" value="ATPase_F1/V1/A1_a/bsu_N"/>
</dbReference>
<dbReference type="InterPro" id="IPR036121">
    <property type="entry name" value="ATPase_F1/V1/A1_a/bsu_N_sf"/>
</dbReference>
<dbReference type="InterPro" id="IPR000194">
    <property type="entry name" value="ATPase_F1/V1/A1_a/bsu_nucl-bd"/>
</dbReference>
<dbReference type="InterPro" id="IPR024034">
    <property type="entry name" value="ATPase_F1/V1_b/a_C"/>
</dbReference>
<dbReference type="InterPro" id="IPR027417">
    <property type="entry name" value="P-loop_NTPase"/>
</dbReference>
<dbReference type="NCBIfam" id="TIGR01039">
    <property type="entry name" value="atpD"/>
    <property type="match status" value="1"/>
</dbReference>
<dbReference type="PANTHER" id="PTHR15184">
    <property type="entry name" value="ATP SYNTHASE"/>
    <property type="match status" value="1"/>
</dbReference>
<dbReference type="PANTHER" id="PTHR15184:SF71">
    <property type="entry name" value="ATP SYNTHASE SUBUNIT BETA, MITOCHONDRIAL"/>
    <property type="match status" value="1"/>
</dbReference>
<dbReference type="Pfam" id="PF00006">
    <property type="entry name" value="ATP-synt_ab"/>
    <property type="match status" value="1"/>
</dbReference>
<dbReference type="Pfam" id="PF02874">
    <property type="entry name" value="ATP-synt_ab_N"/>
    <property type="match status" value="1"/>
</dbReference>
<dbReference type="Pfam" id="PF22919">
    <property type="entry name" value="ATP-synt_VA_C"/>
    <property type="match status" value="1"/>
</dbReference>
<dbReference type="SMART" id="SM00382">
    <property type="entry name" value="AAA"/>
    <property type="match status" value="1"/>
</dbReference>
<dbReference type="SUPFAM" id="SSF47917">
    <property type="entry name" value="C-terminal domain of alpha and beta subunits of F1 ATP synthase"/>
    <property type="match status" value="1"/>
</dbReference>
<dbReference type="SUPFAM" id="SSF50615">
    <property type="entry name" value="N-terminal domain of alpha and beta subunits of F1 ATP synthase"/>
    <property type="match status" value="1"/>
</dbReference>
<dbReference type="SUPFAM" id="SSF52540">
    <property type="entry name" value="P-loop containing nucleoside triphosphate hydrolases"/>
    <property type="match status" value="1"/>
</dbReference>
<dbReference type="PROSITE" id="PS00152">
    <property type="entry name" value="ATPASE_ALPHA_BETA"/>
    <property type="match status" value="1"/>
</dbReference>
<protein>
    <recommendedName>
        <fullName evidence="1">ATP synthase subunit beta</fullName>
        <ecNumber evidence="1">7.1.2.2</ecNumber>
    </recommendedName>
    <alternativeName>
        <fullName evidence="1">ATP synthase F1 sector subunit beta</fullName>
    </alternativeName>
    <alternativeName>
        <fullName evidence="1">F-ATPase subunit beta</fullName>
    </alternativeName>
</protein>
<accession>Q8PGG7</accession>
<sequence>MSQGKIVQIIGAVVDVEFPRNEVPKVYHALKVDGTEITLEVQQQLGDGVVRTIALGSTDGLKRNLVATNTERAISVPVGAGTLGRIMDVLGRPIDEAGDVQASDHWEIHRGAPSYEDQSSSTELLETGIKVIDLMCPFAKGGKVGLFGGAGVGKTVNMMELINNIAKAHSGLSVFAGVGERTREGNDFYHEMKDSNVLDKVAMVYGQMNEPPGNRLRVALTGLTMAEYFRDEKDASGKGKDVLLFVDNIYRYTLAGTEVSALLGRMPSAVGYQPTLAEEMGVLQERITSTKSGSITSIQAVYVPADDLTDPSPATTFAHLDSTVTLSRNIASLGIYPAVDPLDSTSRQMDPLVIGHEHYDTAQRVQQTLQKYKELKDIIAILGMDELSEEDKQSVSRARKIERFFSQPFHVAEVFTGSPGKYVSLKDTIRGFKAICDGEYDHLPEQAFYMVGSIEEAVEKANKMSAKA</sequence>
<gene>
    <name evidence="1" type="primary">atpD</name>
    <name type="ordered locus">XAC3649</name>
</gene>
<organism>
    <name type="scientific">Xanthomonas axonopodis pv. citri (strain 306)</name>
    <dbReference type="NCBI Taxonomy" id="190486"/>
    <lineage>
        <taxon>Bacteria</taxon>
        <taxon>Pseudomonadati</taxon>
        <taxon>Pseudomonadota</taxon>
        <taxon>Gammaproteobacteria</taxon>
        <taxon>Lysobacterales</taxon>
        <taxon>Lysobacteraceae</taxon>
        <taxon>Xanthomonas</taxon>
    </lineage>
</organism>
<reference key="1">
    <citation type="journal article" date="2002" name="Nature">
        <title>Comparison of the genomes of two Xanthomonas pathogens with differing host specificities.</title>
        <authorList>
            <person name="da Silva A.C.R."/>
            <person name="Ferro J.A."/>
            <person name="Reinach F.C."/>
            <person name="Farah C.S."/>
            <person name="Furlan L.R."/>
            <person name="Quaggio R.B."/>
            <person name="Monteiro-Vitorello C.B."/>
            <person name="Van Sluys M.A."/>
            <person name="Almeida N.F. Jr."/>
            <person name="Alves L.M.C."/>
            <person name="do Amaral A.M."/>
            <person name="Bertolini M.C."/>
            <person name="Camargo L.E.A."/>
            <person name="Camarotte G."/>
            <person name="Cannavan F."/>
            <person name="Cardozo J."/>
            <person name="Chambergo F."/>
            <person name="Ciapina L.P."/>
            <person name="Cicarelli R.M.B."/>
            <person name="Coutinho L.L."/>
            <person name="Cursino-Santos J.R."/>
            <person name="El-Dorry H."/>
            <person name="Faria J.B."/>
            <person name="Ferreira A.J.S."/>
            <person name="Ferreira R.C.C."/>
            <person name="Ferro M.I.T."/>
            <person name="Formighieri E.F."/>
            <person name="Franco M.C."/>
            <person name="Greggio C.C."/>
            <person name="Gruber A."/>
            <person name="Katsuyama A.M."/>
            <person name="Kishi L.T."/>
            <person name="Leite R.P."/>
            <person name="Lemos E.G.M."/>
            <person name="Lemos M.V.F."/>
            <person name="Locali E.C."/>
            <person name="Machado M.A."/>
            <person name="Madeira A.M.B.N."/>
            <person name="Martinez-Rossi N.M."/>
            <person name="Martins E.C."/>
            <person name="Meidanis J."/>
            <person name="Menck C.F.M."/>
            <person name="Miyaki C.Y."/>
            <person name="Moon D.H."/>
            <person name="Moreira L.M."/>
            <person name="Novo M.T.M."/>
            <person name="Okura V.K."/>
            <person name="Oliveira M.C."/>
            <person name="Oliveira V.R."/>
            <person name="Pereira H.A."/>
            <person name="Rossi A."/>
            <person name="Sena J.A.D."/>
            <person name="Silva C."/>
            <person name="de Souza R.F."/>
            <person name="Spinola L.A.F."/>
            <person name="Takita M.A."/>
            <person name="Tamura R.E."/>
            <person name="Teixeira E.C."/>
            <person name="Tezza R.I.D."/>
            <person name="Trindade dos Santos M."/>
            <person name="Truffi D."/>
            <person name="Tsai S.M."/>
            <person name="White F.F."/>
            <person name="Setubal J.C."/>
            <person name="Kitajima J.P."/>
        </authorList>
    </citation>
    <scope>NUCLEOTIDE SEQUENCE [LARGE SCALE GENOMIC DNA]</scope>
    <source>
        <strain>306</strain>
    </source>
</reference>
<proteinExistence type="inferred from homology"/>
<keyword id="KW-0066">ATP synthesis</keyword>
<keyword id="KW-0067">ATP-binding</keyword>
<keyword id="KW-0997">Cell inner membrane</keyword>
<keyword id="KW-1003">Cell membrane</keyword>
<keyword id="KW-0139">CF(1)</keyword>
<keyword id="KW-0375">Hydrogen ion transport</keyword>
<keyword id="KW-0406">Ion transport</keyword>
<keyword id="KW-0472">Membrane</keyword>
<keyword id="KW-0547">Nucleotide-binding</keyword>
<keyword id="KW-1278">Translocase</keyword>
<keyword id="KW-0813">Transport</keyword>
<name>ATPB_XANAC</name>
<feature type="chain" id="PRO_0000254427" description="ATP synthase subunit beta">
    <location>
        <begin position="1"/>
        <end position="468"/>
    </location>
</feature>
<feature type="binding site" evidence="1">
    <location>
        <begin position="148"/>
        <end position="155"/>
    </location>
    <ligand>
        <name>ATP</name>
        <dbReference type="ChEBI" id="CHEBI:30616"/>
    </ligand>
</feature>
<evidence type="ECO:0000255" key="1">
    <source>
        <dbReference type="HAMAP-Rule" id="MF_01347"/>
    </source>
</evidence>
<comment type="function">
    <text evidence="1">Produces ATP from ADP in the presence of a proton gradient across the membrane. The catalytic sites are hosted primarily by the beta subunits.</text>
</comment>
<comment type="catalytic activity">
    <reaction evidence="1">
        <text>ATP + H2O + 4 H(+)(in) = ADP + phosphate + 5 H(+)(out)</text>
        <dbReference type="Rhea" id="RHEA:57720"/>
        <dbReference type="ChEBI" id="CHEBI:15377"/>
        <dbReference type="ChEBI" id="CHEBI:15378"/>
        <dbReference type="ChEBI" id="CHEBI:30616"/>
        <dbReference type="ChEBI" id="CHEBI:43474"/>
        <dbReference type="ChEBI" id="CHEBI:456216"/>
        <dbReference type="EC" id="7.1.2.2"/>
    </reaction>
</comment>
<comment type="subunit">
    <text evidence="1">F-type ATPases have 2 components, CF(1) - the catalytic core - and CF(0) - the membrane proton channel. CF(1) has five subunits: alpha(3), beta(3), gamma(1), delta(1), epsilon(1). CF(0) has three main subunits: a(1), b(2) and c(9-12). The alpha and beta chains form an alternating ring which encloses part of the gamma chain. CF(1) is attached to CF(0) by a central stalk formed by the gamma and epsilon chains, while a peripheral stalk is formed by the delta and b chains.</text>
</comment>
<comment type="subcellular location">
    <subcellularLocation>
        <location evidence="1">Cell inner membrane</location>
        <topology evidence="1">Peripheral membrane protein</topology>
    </subcellularLocation>
</comment>
<comment type="similarity">
    <text evidence="1">Belongs to the ATPase alpha/beta chains family.</text>
</comment>